<dbReference type="EMBL" id="CP017630">
    <property type="protein sequence ID" value="AOW31454.1"/>
    <property type="molecule type" value="Genomic_DNA"/>
</dbReference>
<dbReference type="RefSeq" id="XP_019331100.1">
    <property type="nucleotide sequence ID" value="XM_019475555.1"/>
</dbReference>
<dbReference type="PDB" id="7PZY">
    <property type="method" value="EM"/>
    <property type="resolution" value="2.32 A"/>
    <property type="chains" value="c=1-82"/>
</dbReference>
<dbReference type="PDB" id="7Q08">
    <property type="method" value="EM"/>
    <property type="resolution" value="2.56 A"/>
    <property type="chains" value="c=1-82"/>
</dbReference>
<dbReference type="PDB" id="7Q0F">
    <property type="method" value="EM"/>
    <property type="resolution" value="2.64 A"/>
    <property type="chains" value="c=1-82"/>
</dbReference>
<dbReference type="PDB" id="7Q0P">
    <property type="method" value="EM"/>
    <property type="resolution" value="2.77 A"/>
    <property type="chains" value="c=1-82"/>
</dbReference>
<dbReference type="PDB" id="7Q0R">
    <property type="method" value="EM"/>
    <property type="resolution" value="2.67 A"/>
    <property type="chains" value="c=1-82"/>
</dbReference>
<dbReference type="PDB" id="8C3A">
    <property type="method" value="X-ray"/>
    <property type="resolution" value="3.00 A"/>
    <property type="chains" value="DO/d=1-82"/>
</dbReference>
<dbReference type="PDB" id="8OGJ">
    <property type="method" value="EM"/>
    <property type="resolution" value="3.10 A"/>
    <property type="chains" value="c=1-82"/>
</dbReference>
<dbReference type="PDB" id="8OH6">
    <property type="method" value="X-ray"/>
    <property type="resolution" value="3.35 A"/>
    <property type="chains" value="DO/d=1-82"/>
</dbReference>
<dbReference type="PDB" id="8OI5">
    <property type="method" value="X-ray"/>
    <property type="resolution" value="2.90 A"/>
    <property type="chains" value="DO/d=1-82"/>
</dbReference>
<dbReference type="PDB" id="8OJ3">
    <property type="method" value="X-ray"/>
    <property type="resolution" value="3.50 A"/>
    <property type="chains" value="DO/d=1-82"/>
</dbReference>
<dbReference type="PDBsum" id="7PZY"/>
<dbReference type="PDBsum" id="7Q08"/>
<dbReference type="PDBsum" id="7Q0F"/>
<dbReference type="PDBsum" id="7Q0P"/>
<dbReference type="PDBsum" id="7Q0R"/>
<dbReference type="PDBsum" id="8C3A"/>
<dbReference type="PDBsum" id="8OGJ"/>
<dbReference type="PDBsum" id="8OH6"/>
<dbReference type="PDBsum" id="8OI5"/>
<dbReference type="PDBsum" id="8OJ3"/>
<dbReference type="EMDB" id="EMD-13737"/>
<dbReference type="EMDB" id="EMD-13741"/>
<dbReference type="EMDB" id="EMD-13744"/>
<dbReference type="EMDB" id="EMD-13749"/>
<dbReference type="EMDB" id="EMD-13750"/>
<dbReference type="SMR" id="A0A1D8PTI7"/>
<dbReference type="FunCoup" id="A0A1D8PTI7">
    <property type="interactions" value="888"/>
</dbReference>
<dbReference type="STRING" id="237561.A0A1D8PTI7"/>
<dbReference type="EnsemblFungi" id="CR_07630C_A-T">
    <property type="protein sequence ID" value="CR_07630C_A-T-p1"/>
    <property type="gene ID" value="CR_07630C_A"/>
</dbReference>
<dbReference type="GeneID" id="30515429"/>
<dbReference type="KEGG" id="cal:CAALFM_CR07630CA"/>
<dbReference type="CGD" id="CAL0000200692">
    <property type="gene designation" value="RPS27"/>
</dbReference>
<dbReference type="VEuPathDB" id="FungiDB:CR_07630C_A"/>
<dbReference type="eggNOG" id="KOG1779">
    <property type="taxonomic scope" value="Eukaryota"/>
</dbReference>
<dbReference type="InParanoid" id="A0A1D8PTI7"/>
<dbReference type="OMA" id="CASILCQ"/>
<dbReference type="OrthoDB" id="5567124at2759"/>
<dbReference type="Proteomes" id="UP000000559">
    <property type="component" value="Chromosome R"/>
</dbReference>
<dbReference type="GO" id="GO:0022627">
    <property type="term" value="C:cytosolic small ribosomal subunit"/>
    <property type="evidence" value="ECO:0000318"/>
    <property type="project" value="GO_Central"/>
</dbReference>
<dbReference type="GO" id="GO:0003723">
    <property type="term" value="F:RNA binding"/>
    <property type="evidence" value="ECO:0000318"/>
    <property type="project" value="GO_Central"/>
</dbReference>
<dbReference type="GO" id="GO:0003735">
    <property type="term" value="F:structural constituent of ribosome"/>
    <property type="evidence" value="ECO:0000318"/>
    <property type="project" value="GO_Central"/>
</dbReference>
<dbReference type="GO" id="GO:0000028">
    <property type="term" value="P:ribosomal small subunit assembly"/>
    <property type="evidence" value="ECO:0000318"/>
    <property type="project" value="GO_Central"/>
</dbReference>
<dbReference type="GO" id="GO:0006412">
    <property type="term" value="P:translation"/>
    <property type="evidence" value="ECO:0007669"/>
    <property type="project" value="InterPro"/>
</dbReference>
<dbReference type="FunFam" id="2.20.25.100:FF:000001">
    <property type="entry name" value="40S ribosomal protein S27"/>
    <property type="match status" value="1"/>
</dbReference>
<dbReference type="Gene3D" id="2.20.25.100">
    <property type="entry name" value="Zn-binding ribosomal proteins"/>
    <property type="match status" value="1"/>
</dbReference>
<dbReference type="HAMAP" id="MF_00371">
    <property type="entry name" value="Ribosomal_eS27"/>
    <property type="match status" value="1"/>
</dbReference>
<dbReference type="InterPro" id="IPR000592">
    <property type="entry name" value="Ribosomal_eS27"/>
</dbReference>
<dbReference type="InterPro" id="IPR023407">
    <property type="entry name" value="Ribosomal_eS27_Zn-bd_dom_sf"/>
</dbReference>
<dbReference type="InterPro" id="IPR011332">
    <property type="entry name" value="Ribosomal_zn-bd"/>
</dbReference>
<dbReference type="PANTHER" id="PTHR11594">
    <property type="entry name" value="40S RIBOSOMAL PROTEIN S27"/>
    <property type="match status" value="1"/>
</dbReference>
<dbReference type="Pfam" id="PF01667">
    <property type="entry name" value="Ribosomal_S27e"/>
    <property type="match status" value="1"/>
</dbReference>
<dbReference type="SUPFAM" id="SSF57829">
    <property type="entry name" value="Zn-binding ribosomal proteins"/>
    <property type="match status" value="1"/>
</dbReference>
<dbReference type="PROSITE" id="PS01168">
    <property type="entry name" value="RIBOSOMAL_S27E"/>
    <property type="match status" value="1"/>
</dbReference>
<gene>
    <name type="primary">RPS27</name>
    <name type="ordered locus">CAALFM_CR07630CA</name>
    <name type="ordered locus">orf19.6286.2</name>
</gene>
<sequence>MVLVQDLLHPSPATEAKQHKLKTLVQQPRSFFMDVKCQGCLNITTVFSHAQTAVTCDSCSTVLCTPTGGKAKLTEGCSFRRK</sequence>
<reference key="1">
    <citation type="journal article" date="2004" name="Proc. Natl. Acad. Sci. U.S.A.">
        <title>The diploid genome sequence of Candida albicans.</title>
        <authorList>
            <person name="Jones T."/>
            <person name="Federspiel N.A."/>
            <person name="Chibana H."/>
            <person name="Dungan J."/>
            <person name="Kalman S."/>
            <person name="Magee B.B."/>
            <person name="Newport G."/>
            <person name="Thorstenson Y.R."/>
            <person name="Agabian N."/>
            <person name="Magee P.T."/>
            <person name="Davis R.W."/>
            <person name="Scherer S."/>
        </authorList>
    </citation>
    <scope>NUCLEOTIDE SEQUENCE [LARGE SCALE GENOMIC DNA]</scope>
    <source>
        <strain>SC5314 / ATCC MYA-2876</strain>
    </source>
</reference>
<reference key="2">
    <citation type="journal article" date="2007" name="Genome Biol.">
        <title>Assembly of the Candida albicans genome into sixteen supercontigs aligned on the eight chromosomes.</title>
        <authorList>
            <person name="van het Hoog M."/>
            <person name="Rast T.J."/>
            <person name="Martchenko M."/>
            <person name="Grindle S."/>
            <person name="Dignard D."/>
            <person name="Hogues H."/>
            <person name="Cuomo C."/>
            <person name="Berriman M."/>
            <person name="Scherer S."/>
            <person name="Magee B.B."/>
            <person name="Whiteway M."/>
            <person name="Chibana H."/>
            <person name="Nantel A."/>
            <person name="Magee P.T."/>
        </authorList>
    </citation>
    <scope>GENOME REANNOTATION</scope>
    <source>
        <strain>SC5314 / ATCC MYA-2876</strain>
    </source>
</reference>
<reference key="3">
    <citation type="journal article" date="2013" name="Genome Biol.">
        <title>Assembly of a phased diploid Candida albicans genome facilitates allele-specific measurements and provides a simple model for repeat and indel structure.</title>
        <authorList>
            <person name="Muzzey D."/>
            <person name="Schwartz K."/>
            <person name="Weissman J.S."/>
            <person name="Sherlock G."/>
        </authorList>
    </citation>
    <scope>NUCLEOTIDE SEQUENCE [LARGE SCALE GENOMIC DNA]</scope>
    <scope>GENOME REANNOTATION</scope>
    <source>
        <strain>SC5314 / ATCC MYA-2876</strain>
    </source>
</reference>
<reference evidence="6 7 8" key="4">
    <citation type="journal article" date="2022" name="Sci. Adv.">
        <title>E-site drug specificity of the human pathogen Candida albicans ribosome.</title>
        <authorList>
            <person name="Zgadzay Y."/>
            <person name="Kolosova O."/>
            <person name="Stetsenko A."/>
            <person name="Wu C."/>
            <person name="Bruchlen D."/>
            <person name="Usachev K."/>
            <person name="Validov S."/>
            <person name="Jenner L."/>
            <person name="Rogachev A."/>
            <person name="Yusupova G."/>
            <person name="Sachs M.S."/>
            <person name="Guskov A."/>
            <person name="Yusupov M."/>
        </authorList>
    </citation>
    <scope>STRUCTURE BY ELECTRON MICROSCOPY (2.32 ANGSTROMS) OF THE 80S RIBOSOME</scope>
    <scope>SUBUNIT</scope>
</reference>
<accession>A0A1D8PTI7</accession>
<comment type="function">
    <text evidence="5">Component of the ribosome, a large ribonucleoprotein complex responsible for the synthesis of proteins in the cell. The small ribosomal subunit (SSU) binds messenger RNAs (mRNAs) and translates the encoded message by selecting cognate aminoacyl-transfer RNA (tRNA) molecules. The large subunit (LSU) contains the ribosomal catalytic site termed the peptidyl transferase center (PTC), which catalyzes the formation of peptide bonds, thereby polymerizing the amino acids delivered by tRNAs into a polypeptide chain. The nascent polypeptides leave the ribosome through a tunnel in the LSU and interact with protein factors that function in enzymatic processing, targeting, and the membrane insertion of nascent chains at the exit of the ribosomal tunnel.</text>
</comment>
<comment type="cofactor">
    <cofactor evidence="1">
        <name>Zn(2+)</name>
        <dbReference type="ChEBI" id="CHEBI:29105"/>
    </cofactor>
    <text evidence="1">Binds 1 zinc ion per subunit.</text>
</comment>
<comment type="subunit">
    <text evidence="2">Component of the small ribosomal subunit (PubMed:35613268). Mature ribosomes consist of a small (40S) and a large (60S) subunit (PubMed:35613268). The 40S subunit contains about 32 different proteins and 1 molecule of RNA (18S) (PubMed:35613268). The 60S subunit contains 45 different proteins and 3 molecules of RNA (25S, 5.8S and 5S) (PubMed:35613268).</text>
</comment>
<comment type="subcellular location">
    <subcellularLocation>
        <location evidence="5">Cytoplasm</location>
    </subcellularLocation>
</comment>
<comment type="similarity">
    <text evidence="4">Belongs to the eukaryotic ribosomal protein eS27 family.</text>
</comment>
<keyword id="KW-0002">3D-structure</keyword>
<keyword id="KW-0963">Cytoplasm</keyword>
<keyword id="KW-1185">Reference proteome</keyword>
<keyword id="KW-0687">Ribonucleoprotein</keyword>
<keyword id="KW-0689">Ribosomal protein</keyword>
<keyword id="KW-0862">Zinc</keyword>
<proteinExistence type="evidence at protein level"/>
<evidence type="ECO:0000255" key="1">
    <source>
        <dbReference type="RuleBase" id="RU000671"/>
    </source>
</evidence>
<evidence type="ECO:0000269" key="2">
    <source>
    </source>
</evidence>
<evidence type="ECO:0000303" key="3">
    <source>
    </source>
</evidence>
<evidence type="ECO:0000305" key="4"/>
<evidence type="ECO:0000305" key="5">
    <source>
    </source>
</evidence>
<evidence type="ECO:0007744" key="6">
    <source>
        <dbReference type="PDB" id="7PZY"/>
    </source>
</evidence>
<evidence type="ECO:0007744" key="7">
    <source>
        <dbReference type="PDB" id="7Q0F"/>
    </source>
</evidence>
<evidence type="ECO:0007744" key="8">
    <source>
        <dbReference type="PDB" id="7Q0P"/>
    </source>
</evidence>
<feature type="chain" id="PRO_0000456564" description="Small ribosomal subunit protein eS27">
    <location>
        <begin position="1"/>
        <end position="82"/>
    </location>
</feature>
<feature type="binding site" evidence="2 6">
    <location>
        <position position="37"/>
    </location>
    <ligand>
        <name>Zn(2+)</name>
        <dbReference type="ChEBI" id="CHEBI:29105"/>
        <label>101</label>
    </ligand>
</feature>
<feature type="binding site" evidence="2 6">
    <location>
        <position position="40"/>
    </location>
    <ligand>
        <name>Zn(2+)</name>
        <dbReference type="ChEBI" id="CHEBI:29105"/>
        <label>101</label>
    </ligand>
</feature>
<feature type="binding site" evidence="2 6">
    <location>
        <position position="56"/>
    </location>
    <ligand>
        <name>Zn(2+)</name>
        <dbReference type="ChEBI" id="CHEBI:29105"/>
        <label>101</label>
    </ligand>
</feature>
<feature type="binding site" evidence="2 6">
    <location>
        <position position="59"/>
    </location>
    <ligand>
        <name>Zn(2+)</name>
        <dbReference type="ChEBI" id="CHEBI:29105"/>
        <label>101</label>
    </ligand>
</feature>
<organism>
    <name type="scientific">Candida albicans (strain SC5314 / ATCC MYA-2876)</name>
    <name type="common">Yeast</name>
    <dbReference type="NCBI Taxonomy" id="237561"/>
    <lineage>
        <taxon>Eukaryota</taxon>
        <taxon>Fungi</taxon>
        <taxon>Dikarya</taxon>
        <taxon>Ascomycota</taxon>
        <taxon>Saccharomycotina</taxon>
        <taxon>Pichiomycetes</taxon>
        <taxon>Debaryomycetaceae</taxon>
        <taxon>Candida/Lodderomyces clade</taxon>
        <taxon>Candida</taxon>
    </lineage>
</organism>
<protein>
    <recommendedName>
        <fullName evidence="3">Small ribosomal subunit protein eS27</fullName>
    </recommendedName>
    <alternativeName>
        <fullName>40S ribosomal protein S27</fullName>
    </alternativeName>
</protein>
<name>RS27_CANAL</name>